<feature type="chain" id="PRO_0000135612" description="Nascent polypeptide-associated complex protein">
    <location>
        <begin position="1"/>
        <end position="114"/>
    </location>
</feature>
<feature type="domain" description="NAC-A/B" evidence="1">
    <location>
        <begin position="5"/>
        <end position="69"/>
    </location>
</feature>
<evidence type="ECO:0000255" key="1">
    <source>
        <dbReference type="HAMAP-Rule" id="MF_00814"/>
    </source>
</evidence>
<protein>
    <recommendedName>
        <fullName evidence="1">Nascent polypeptide-associated complex protein</fullName>
    </recommendedName>
</protein>
<gene>
    <name evidence="1" type="primary">nac</name>
    <name type="ordered locus">STK_21890</name>
</gene>
<organism>
    <name type="scientific">Sulfurisphaera tokodaii (strain DSM 16993 / JCM 10545 / NBRC 100140 / 7)</name>
    <name type="common">Sulfolobus tokodaii</name>
    <dbReference type="NCBI Taxonomy" id="273063"/>
    <lineage>
        <taxon>Archaea</taxon>
        <taxon>Thermoproteota</taxon>
        <taxon>Thermoprotei</taxon>
        <taxon>Sulfolobales</taxon>
        <taxon>Sulfolobaceae</taxon>
        <taxon>Sulfurisphaera</taxon>
    </lineage>
</organism>
<comment type="function">
    <text evidence="1">Contacts the emerging nascent chain on the ribosome.</text>
</comment>
<comment type="subunit">
    <text evidence="1">Homodimer. Interacts with the ribosome. Binds ribosomal RNA.</text>
</comment>
<comment type="similarity">
    <text evidence="1">Belongs to the NAC-alpha family.</text>
</comment>
<keyword id="KW-0653">Protein transport</keyword>
<keyword id="KW-1185">Reference proteome</keyword>
<keyword id="KW-0694">RNA-binding</keyword>
<keyword id="KW-0813">Transport</keyword>
<sequence length="114" mass="12779">MKPKPSQFKNLERMLGLKTEQLDAVKVTIELKDKILIIENPTVIKMIAQGQEIYSVIGEAKEAQKEEPKVEIKDEDVKFVMEQTGKGEQEVKEALQKANGDIAKAILLLTGQET</sequence>
<proteinExistence type="inferred from homology"/>
<name>NAC_SULTO</name>
<accession>Q96YI2</accession>
<reference key="1">
    <citation type="journal article" date="2001" name="DNA Res.">
        <title>Complete genome sequence of an aerobic thermoacidophilic Crenarchaeon, Sulfolobus tokodaii strain7.</title>
        <authorList>
            <person name="Kawarabayasi Y."/>
            <person name="Hino Y."/>
            <person name="Horikawa H."/>
            <person name="Jin-no K."/>
            <person name="Takahashi M."/>
            <person name="Sekine M."/>
            <person name="Baba S."/>
            <person name="Ankai A."/>
            <person name="Kosugi H."/>
            <person name="Hosoyama A."/>
            <person name="Fukui S."/>
            <person name="Nagai Y."/>
            <person name="Nishijima K."/>
            <person name="Otsuka R."/>
            <person name="Nakazawa H."/>
            <person name="Takamiya M."/>
            <person name="Kato Y."/>
            <person name="Yoshizawa T."/>
            <person name="Tanaka T."/>
            <person name="Kudoh Y."/>
            <person name="Yamazaki J."/>
            <person name="Kushida N."/>
            <person name="Oguchi A."/>
            <person name="Aoki K."/>
            <person name="Masuda S."/>
            <person name="Yanagii M."/>
            <person name="Nishimura M."/>
            <person name="Yamagishi A."/>
            <person name="Oshima T."/>
            <person name="Kikuchi H."/>
        </authorList>
    </citation>
    <scope>NUCLEOTIDE SEQUENCE [LARGE SCALE GENOMIC DNA]</scope>
    <source>
        <strain>DSM 16993 / JCM 10545 / NBRC 100140 / 7</strain>
    </source>
</reference>
<dbReference type="EMBL" id="BA000023">
    <property type="protein sequence ID" value="BAB67295.1"/>
    <property type="molecule type" value="Genomic_DNA"/>
</dbReference>
<dbReference type="SMR" id="Q96YI2"/>
<dbReference type="STRING" id="273063.STK_21890"/>
<dbReference type="KEGG" id="sto:STK_21890"/>
<dbReference type="PATRIC" id="fig|273063.9.peg.2485"/>
<dbReference type="eggNOG" id="arCOG04061">
    <property type="taxonomic scope" value="Archaea"/>
</dbReference>
<dbReference type="OrthoDB" id="53273at2157"/>
<dbReference type="Proteomes" id="UP000001015">
    <property type="component" value="Chromosome"/>
</dbReference>
<dbReference type="GO" id="GO:0003723">
    <property type="term" value="F:RNA binding"/>
    <property type="evidence" value="ECO:0007669"/>
    <property type="project" value="UniProtKB-UniRule"/>
</dbReference>
<dbReference type="GO" id="GO:0015031">
    <property type="term" value="P:protein transport"/>
    <property type="evidence" value="ECO:0007669"/>
    <property type="project" value="UniProtKB-UniRule"/>
</dbReference>
<dbReference type="CDD" id="cd14359">
    <property type="entry name" value="UBA_AeNAC"/>
    <property type="match status" value="1"/>
</dbReference>
<dbReference type="Gene3D" id="1.10.8.10">
    <property type="entry name" value="DNA helicase RuvA subunit, C-terminal domain"/>
    <property type="match status" value="1"/>
</dbReference>
<dbReference type="Gene3D" id="2.20.70.30">
    <property type="entry name" value="Nascent polypeptide-associated complex domain"/>
    <property type="match status" value="1"/>
</dbReference>
<dbReference type="HAMAP" id="MF_00814">
    <property type="entry name" value="NAC_arch"/>
    <property type="match status" value="1"/>
</dbReference>
<dbReference type="InterPro" id="IPR044034">
    <property type="entry name" value="NAC-like_UBA"/>
</dbReference>
<dbReference type="InterPro" id="IPR038187">
    <property type="entry name" value="NAC_A/B_dom_sf"/>
</dbReference>
<dbReference type="InterPro" id="IPR005231">
    <property type="entry name" value="NAC_arc"/>
</dbReference>
<dbReference type="InterPro" id="IPR002715">
    <property type="entry name" value="Nas_poly-pep-assoc_cplx_dom"/>
</dbReference>
<dbReference type="InterPro" id="IPR009060">
    <property type="entry name" value="UBA-like_sf"/>
</dbReference>
<dbReference type="NCBIfam" id="TIGR00264">
    <property type="entry name" value="archaeal-type nascent polypeptide-associated complex protein"/>
    <property type="match status" value="1"/>
</dbReference>
<dbReference type="Pfam" id="PF01849">
    <property type="entry name" value="NAC"/>
    <property type="match status" value="1"/>
</dbReference>
<dbReference type="Pfam" id="PF19026">
    <property type="entry name" value="UBA_HYPK"/>
    <property type="match status" value="1"/>
</dbReference>
<dbReference type="SMART" id="SM01407">
    <property type="entry name" value="NAC"/>
    <property type="match status" value="1"/>
</dbReference>
<dbReference type="SUPFAM" id="SSF46934">
    <property type="entry name" value="UBA-like"/>
    <property type="match status" value="1"/>
</dbReference>
<dbReference type="PROSITE" id="PS51151">
    <property type="entry name" value="NAC_AB"/>
    <property type="match status" value="1"/>
</dbReference>